<name>NDHN_SYNR3</name>
<dbReference type="EC" id="7.1.1.-" evidence="1"/>
<dbReference type="EMBL" id="CT978603">
    <property type="protein sequence ID" value="CAK29018.1"/>
    <property type="molecule type" value="Genomic_DNA"/>
</dbReference>
<dbReference type="SMR" id="A5GVV9"/>
<dbReference type="STRING" id="316278.SynRCC307_2115"/>
<dbReference type="KEGG" id="syr:SynRCC307_2115"/>
<dbReference type="eggNOG" id="ENOG502ZBMI">
    <property type="taxonomic scope" value="Bacteria"/>
</dbReference>
<dbReference type="HOGENOM" id="CLU_087432_0_0_3"/>
<dbReference type="OrthoDB" id="510798at2"/>
<dbReference type="Proteomes" id="UP000001115">
    <property type="component" value="Chromosome"/>
</dbReference>
<dbReference type="GO" id="GO:0031676">
    <property type="term" value="C:plasma membrane-derived thylakoid membrane"/>
    <property type="evidence" value="ECO:0007669"/>
    <property type="project" value="UniProtKB-SubCell"/>
</dbReference>
<dbReference type="GO" id="GO:0016655">
    <property type="term" value="F:oxidoreductase activity, acting on NAD(P)H, quinone or similar compound as acceptor"/>
    <property type="evidence" value="ECO:0007669"/>
    <property type="project" value="UniProtKB-UniRule"/>
</dbReference>
<dbReference type="GO" id="GO:0048038">
    <property type="term" value="F:quinone binding"/>
    <property type="evidence" value="ECO:0007669"/>
    <property type="project" value="UniProtKB-KW"/>
</dbReference>
<dbReference type="HAMAP" id="MF_01353">
    <property type="entry name" value="NDH1_NDH1N"/>
    <property type="match status" value="1"/>
</dbReference>
<dbReference type="InterPro" id="IPR020874">
    <property type="entry name" value="NAD(P)H-quinone_OxRdtase_su_N"/>
</dbReference>
<dbReference type="PANTHER" id="PTHR35515">
    <property type="entry name" value="NAD(P)H-QUINONE OXIDOREDUCTASE SUBUNIT N, CHLOROPLASTIC"/>
    <property type="match status" value="1"/>
</dbReference>
<dbReference type="PANTHER" id="PTHR35515:SF1">
    <property type="entry name" value="NAD(P)H-QUINONE OXIDOREDUCTASE SUBUNIT N, CHLOROPLASTIC"/>
    <property type="match status" value="1"/>
</dbReference>
<dbReference type="Pfam" id="PF11909">
    <property type="entry name" value="NdhN"/>
    <property type="match status" value="1"/>
</dbReference>
<reference key="1">
    <citation type="submission" date="2006-05" db="EMBL/GenBank/DDBJ databases">
        <authorList>
            <consortium name="Genoscope"/>
        </authorList>
    </citation>
    <scope>NUCLEOTIDE SEQUENCE [LARGE SCALE GENOMIC DNA]</scope>
    <source>
        <strain>RCC307</strain>
    </source>
</reference>
<keyword id="KW-0472">Membrane</keyword>
<keyword id="KW-0520">NAD</keyword>
<keyword id="KW-0521">NADP</keyword>
<keyword id="KW-0618">Plastoquinone</keyword>
<keyword id="KW-0874">Quinone</keyword>
<keyword id="KW-1185">Reference proteome</keyword>
<keyword id="KW-0793">Thylakoid</keyword>
<keyword id="KW-1278">Translocase</keyword>
<keyword id="KW-0813">Transport</keyword>
<gene>
    <name evidence="1" type="primary">ndhN</name>
    <name type="ordered locus">SynRCC307_2115</name>
</gene>
<evidence type="ECO:0000255" key="1">
    <source>
        <dbReference type="HAMAP-Rule" id="MF_01353"/>
    </source>
</evidence>
<comment type="function">
    <text evidence="1">NDH-1 shuttles electrons from an unknown electron donor, via FMN and iron-sulfur (Fe-S) centers, to quinones in the respiratory and/or the photosynthetic chain. The immediate electron acceptor for the enzyme in this species is believed to be plastoquinone. Couples the redox reaction to proton translocation, and thus conserves the redox energy in a proton gradient. Cyanobacterial NDH-1 also plays a role in inorganic carbon-concentration.</text>
</comment>
<comment type="catalytic activity">
    <reaction evidence="1">
        <text>a plastoquinone + NADH + (n+1) H(+)(in) = a plastoquinol + NAD(+) + n H(+)(out)</text>
        <dbReference type="Rhea" id="RHEA:42608"/>
        <dbReference type="Rhea" id="RHEA-COMP:9561"/>
        <dbReference type="Rhea" id="RHEA-COMP:9562"/>
        <dbReference type="ChEBI" id="CHEBI:15378"/>
        <dbReference type="ChEBI" id="CHEBI:17757"/>
        <dbReference type="ChEBI" id="CHEBI:57540"/>
        <dbReference type="ChEBI" id="CHEBI:57945"/>
        <dbReference type="ChEBI" id="CHEBI:62192"/>
    </reaction>
</comment>
<comment type="catalytic activity">
    <reaction evidence="1">
        <text>a plastoquinone + NADPH + (n+1) H(+)(in) = a plastoquinol + NADP(+) + n H(+)(out)</text>
        <dbReference type="Rhea" id="RHEA:42612"/>
        <dbReference type="Rhea" id="RHEA-COMP:9561"/>
        <dbReference type="Rhea" id="RHEA-COMP:9562"/>
        <dbReference type="ChEBI" id="CHEBI:15378"/>
        <dbReference type="ChEBI" id="CHEBI:17757"/>
        <dbReference type="ChEBI" id="CHEBI:57783"/>
        <dbReference type="ChEBI" id="CHEBI:58349"/>
        <dbReference type="ChEBI" id="CHEBI:62192"/>
    </reaction>
</comment>
<comment type="subunit">
    <text evidence="1">NDH-1 can be composed of about 15 different subunits; different subcomplexes with different compositions have been identified which probably have different functions.</text>
</comment>
<comment type="subcellular location">
    <subcellularLocation>
        <location evidence="1">Cellular thylakoid membrane</location>
        <topology evidence="1">Peripheral membrane protein</topology>
        <orientation evidence="1">Cytoplasmic side</orientation>
    </subcellularLocation>
</comment>
<comment type="similarity">
    <text evidence="1">Belongs to the complex I NdhN subunit family.</text>
</comment>
<feature type="chain" id="PRO_0000352240" description="NAD(P)H-quinone oxidoreductase subunit N">
    <location>
        <begin position="1"/>
        <end position="153"/>
    </location>
</feature>
<proteinExistence type="inferred from homology"/>
<organism>
    <name type="scientific">Synechococcus sp. (strain RCC307)</name>
    <dbReference type="NCBI Taxonomy" id="316278"/>
    <lineage>
        <taxon>Bacteria</taxon>
        <taxon>Bacillati</taxon>
        <taxon>Cyanobacteriota</taxon>
        <taxon>Cyanophyceae</taxon>
        <taxon>Synechococcales</taxon>
        <taxon>Synechococcaceae</taxon>
        <taxon>Synechococcus</taxon>
    </lineage>
</organism>
<protein>
    <recommendedName>
        <fullName evidence="1">NAD(P)H-quinone oxidoreductase subunit N</fullName>
        <ecNumber evidence="1">7.1.1.-</ecNumber>
    </recommendedName>
    <alternativeName>
        <fullName evidence="1">NAD(P)H dehydrogenase I subunit N</fullName>
        <shortName evidence="1">NDH-1 subunit N</shortName>
        <shortName evidence="1">NDH-N</shortName>
    </alternativeName>
</protein>
<accession>A5GVV9</accession>
<sequence>MPLLLTGRAFRRDLERERALAVYAPLEGGAETRLLRRLRAAGYRTELTSARGLGDPEAFLLGLHGVRPPHLGHHCVGRDAAVGEVQLVMPQLGPALASGAPVVLWMLEGQVLSSAEQASLLALCEREPRLHMVLELGGSRSLRWKPLRAALAA</sequence>